<protein>
    <recommendedName>
        <fullName evidence="1">Probable transcriptional regulatory protein CYB_1350</fullName>
    </recommendedName>
</protein>
<dbReference type="EMBL" id="CP000240">
    <property type="protein sequence ID" value="ABD02323.1"/>
    <property type="molecule type" value="Genomic_DNA"/>
</dbReference>
<dbReference type="RefSeq" id="WP_011432973.1">
    <property type="nucleotide sequence ID" value="NC_007776.1"/>
</dbReference>
<dbReference type="SMR" id="Q2JLT1"/>
<dbReference type="STRING" id="321332.CYB_1350"/>
<dbReference type="KEGG" id="cyb:CYB_1350"/>
<dbReference type="eggNOG" id="COG0217">
    <property type="taxonomic scope" value="Bacteria"/>
</dbReference>
<dbReference type="HOGENOM" id="CLU_062974_2_2_3"/>
<dbReference type="OrthoDB" id="9781053at2"/>
<dbReference type="Proteomes" id="UP000001938">
    <property type="component" value="Chromosome"/>
</dbReference>
<dbReference type="GO" id="GO:0005829">
    <property type="term" value="C:cytosol"/>
    <property type="evidence" value="ECO:0007669"/>
    <property type="project" value="TreeGrafter"/>
</dbReference>
<dbReference type="GO" id="GO:0003677">
    <property type="term" value="F:DNA binding"/>
    <property type="evidence" value="ECO:0007669"/>
    <property type="project" value="UniProtKB-UniRule"/>
</dbReference>
<dbReference type="GO" id="GO:0006355">
    <property type="term" value="P:regulation of DNA-templated transcription"/>
    <property type="evidence" value="ECO:0007669"/>
    <property type="project" value="UniProtKB-UniRule"/>
</dbReference>
<dbReference type="FunFam" id="1.10.10.200:FF:000002">
    <property type="entry name" value="Probable transcriptional regulatory protein CLM62_37755"/>
    <property type="match status" value="1"/>
</dbReference>
<dbReference type="Gene3D" id="1.10.10.200">
    <property type="match status" value="1"/>
</dbReference>
<dbReference type="Gene3D" id="3.30.70.980">
    <property type="match status" value="2"/>
</dbReference>
<dbReference type="HAMAP" id="MF_00693">
    <property type="entry name" value="Transcrip_reg_TACO1"/>
    <property type="match status" value="1"/>
</dbReference>
<dbReference type="InterPro" id="IPR017856">
    <property type="entry name" value="Integrase-like_N"/>
</dbReference>
<dbReference type="InterPro" id="IPR048300">
    <property type="entry name" value="TACO1_YebC-like_2nd/3rd_dom"/>
</dbReference>
<dbReference type="InterPro" id="IPR049083">
    <property type="entry name" value="TACO1_YebC_N"/>
</dbReference>
<dbReference type="InterPro" id="IPR002876">
    <property type="entry name" value="Transcrip_reg_TACO1-like"/>
</dbReference>
<dbReference type="InterPro" id="IPR026564">
    <property type="entry name" value="Transcrip_reg_TACO1-like_dom3"/>
</dbReference>
<dbReference type="InterPro" id="IPR029072">
    <property type="entry name" value="YebC-like"/>
</dbReference>
<dbReference type="NCBIfam" id="NF001030">
    <property type="entry name" value="PRK00110.1"/>
    <property type="match status" value="1"/>
</dbReference>
<dbReference type="NCBIfam" id="NF009044">
    <property type="entry name" value="PRK12378.1"/>
    <property type="match status" value="1"/>
</dbReference>
<dbReference type="NCBIfam" id="TIGR01033">
    <property type="entry name" value="YebC/PmpR family DNA-binding transcriptional regulator"/>
    <property type="match status" value="1"/>
</dbReference>
<dbReference type="PANTHER" id="PTHR12532:SF6">
    <property type="entry name" value="TRANSCRIPTIONAL REGULATORY PROTEIN YEBC-RELATED"/>
    <property type="match status" value="1"/>
</dbReference>
<dbReference type="PANTHER" id="PTHR12532">
    <property type="entry name" value="TRANSLATIONAL ACTIVATOR OF CYTOCHROME C OXIDASE 1"/>
    <property type="match status" value="1"/>
</dbReference>
<dbReference type="Pfam" id="PF20772">
    <property type="entry name" value="TACO1_YebC_N"/>
    <property type="match status" value="1"/>
</dbReference>
<dbReference type="Pfam" id="PF01709">
    <property type="entry name" value="Transcrip_reg"/>
    <property type="match status" value="1"/>
</dbReference>
<dbReference type="SUPFAM" id="SSF75625">
    <property type="entry name" value="YebC-like"/>
    <property type="match status" value="1"/>
</dbReference>
<comment type="subcellular location">
    <subcellularLocation>
        <location evidence="1">Cytoplasm</location>
    </subcellularLocation>
</comment>
<comment type="similarity">
    <text evidence="1">Belongs to the TACO1 family.</text>
</comment>
<proteinExistence type="inferred from homology"/>
<feature type="chain" id="PRO_0000257149" description="Probable transcriptional regulatory protein CYB_1350">
    <location>
        <begin position="1"/>
        <end position="249"/>
    </location>
</feature>
<keyword id="KW-0963">Cytoplasm</keyword>
<keyword id="KW-0238">DNA-binding</keyword>
<keyword id="KW-1185">Reference proteome</keyword>
<keyword id="KW-0804">Transcription</keyword>
<keyword id="KW-0805">Transcription regulation</keyword>
<sequence>MAGHSKWANIKRQKARVDAKKGSLFTKLSRAIIVAARNGLPDPDGNFQLRAAVEKAKAAGMPSENIERAIAKGAGNWSDDSPLEEVRYEGYGPGGVAVLIEAMTDNRNRTAAEVREAFSKTGGSLGEAGCVSWLFRQKGVISLEEVLDPEALLLAVAEAGGDDFKVEGTGAEVYCDYSLLEQVATYLKKEGYPVQDAAIRWIPSTEVHVEDPDTAKSVLALMERLDNLDDVQNVYANFEIDEAVMESLA</sequence>
<evidence type="ECO:0000255" key="1">
    <source>
        <dbReference type="HAMAP-Rule" id="MF_00693"/>
    </source>
</evidence>
<reference key="1">
    <citation type="journal article" date="2007" name="ISME J.">
        <title>Population level functional diversity in a microbial community revealed by comparative genomic and metagenomic analyses.</title>
        <authorList>
            <person name="Bhaya D."/>
            <person name="Grossman A.R."/>
            <person name="Steunou A.-S."/>
            <person name="Khuri N."/>
            <person name="Cohan F.M."/>
            <person name="Hamamura N."/>
            <person name="Melendrez M.C."/>
            <person name="Bateson M.M."/>
            <person name="Ward D.M."/>
            <person name="Heidelberg J.F."/>
        </authorList>
    </citation>
    <scope>NUCLEOTIDE SEQUENCE [LARGE SCALE GENOMIC DNA]</scope>
    <source>
        <strain>JA-2-3B'a(2-13)</strain>
    </source>
</reference>
<gene>
    <name type="ordered locus">CYB_1350</name>
</gene>
<accession>Q2JLT1</accession>
<name>Y1350_SYNJB</name>
<organism>
    <name type="scientific">Synechococcus sp. (strain JA-2-3B'a(2-13))</name>
    <name type="common">Cyanobacteria bacterium Yellowstone B-Prime</name>
    <dbReference type="NCBI Taxonomy" id="321332"/>
    <lineage>
        <taxon>Bacteria</taxon>
        <taxon>Bacillati</taxon>
        <taxon>Cyanobacteriota</taxon>
        <taxon>Cyanophyceae</taxon>
        <taxon>Synechococcales</taxon>
        <taxon>Synechococcaceae</taxon>
        <taxon>Synechococcus</taxon>
    </lineage>
</organism>